<name>METE_NEIM0</name>
<accession>A9M4E3</accession>
<feature type="chain" id="PRO_1000077115" description="5-methyltetrahydropteroyltriglutamate--homocysteine methyltransferase">
    <location>
        <begin position="1"/>
        <end position="758"/>
    </location>
</feature>
<feature type="active site" description="Proton donor" evidence="1">
    <location>
        <position position="696"/>
    </location>
</feature>
<feature type="binding site" evidence="1">
    <location>
        <begin position="16"/>
        <end position="19"/>
    </location>
    <ligand>
        <name>5-methyltetrahydropteroyltri-L-glutamate</name>
        <dbReference type="ChEBI" id="CHEBI:58207"/>
    </ligand>
</feature>
<feature type="binding site" evidence="1">
    <location>
        <position position="112"/>
    </location>
    <ligand>
        <name>5-methyltetrahydropteroyltri-L-glutamate</name>
        <dbReference type="ChEBI" id="CHEBI:58207"/>
    </ligand>
</feature>
<feature type="binding site" evidence="1">
    <location>
        <begin position="433"/>
        <end position="435"/>
    </location>
    <ligand>
        <name>L-homocysteine</name>
        <dbReference type="ChEBI" id="CHEBI:58199"/>
    </ligand>
</feature>
<feature type="binding site" evidence="1">
    <location>
        <begin position="433"/>
        <end position="435"/>
    </location>
    <ligand>
        <name>L-methionine</name>
        <dbReference type="ChEBI" id="CHEBI:57844"/>
    </ligand>
</feature>
<feature type="binding site" evidence="1">
    <location>
        <position position="486"/>
    </location>
    <ligand>
        <name>L-homocysteine</name>
        <dbReference type="ChEBI" id="CHEBI:58199"/>
    </ligand>
</feature>
<feature type="binding site" evidence="1">
    <location>
        <position position="486"/>
    </location>
    <ligand>
        <name>L-methionine</name>
        <dbReference type="ChEBI" id="CHEBI:57844"/>
    </ligand>
</feature>
<feature type="binding site" evidence="1">
    <location>
        <begin position="517"/>
        <end position="518"/>
    </location>
    <ligand>
        <name>5-methyltetrahydropteroyltri-L-glutamate</name>
        <dbReference type="ChEBI" id="CHEBI:58207"/>
    </ligand>
</feature>
<feature type="binding site" evidence="1">
    <location>
        <position position="563"/>
    </location>
    <ligand>
        <name>5-methyltetrahydropteroyltri-L-glutamate</name>
        <dbReference type="ChEBI" id="CHEBI:58207"/>
    </ligand>
</feature>
<feature type="binding site" evidence="1">
    <location>
        <position position="601"/>
    </location>
    <ligand>
        <name>L-homocysteine</name>
        <dbReference type="ChEBI" id="CHEBI:58199"/>
    </ligand>
</feature>
<feature type="binding site" evidence="1">
    <location>
        <position position="601"/>
    </location>
    <ligand>
        <name>L-methionine</name>
        <dbReference type="ChEBI" id="CHEBI:57844"/>
    </ligand>
</feature>
<feature type="binding site" evidence="1">
    <location>
        <position position="607"/>
    </location>
    <ligand>
        <name>5-methyltetrahydropteroyltri-L-glutamate</name>
        <dbReference type="ChEBI" id="CHEBI:58207"/>
    </ligand>
</feature>
<feature type="binding site" evidence="1">
    <location>
        <position position="643"/>
    </location>
    <ligand>
        <name>Zn(2+)</name>
        <dbReference type="ChEBI" id="CHEBI:29105"/>
        <note>catalytic</note>
    </ligand>
</feature>
<feature type="binding site" evidence="1">
    <location>
        <position position="645"/>
    </location>
    <ligand>
        <name>Zn(2+)</name>
        <dbReference type="ChEBI" id="CHEBI:29105"/>
        <note>catalytic</note>
    </ligand>
</feature>
<feature type="binding site" evidence="1">
    <location>
        <position position="667"/>
    </location>
    <ligand>
        <name>Zn(2+)</name>
        <dbReference type="ChEBI" id="CHEBI:29105"/>
        <note>catalytic</note>
    </ligand>
</feature>
<feature type="binding site" evidence="1">
    <location>
        <position position="728"/>
    </location>
    <ligand>
        <name>Zn(2+)</name>
        <dbReference type="ChEBI" id="CHEBI:29105"/>
        <note>catalytic</note>
    </ligand>
</feature>
<sequence>MTTLHFSGFPRVGAFRELKFAQEKYWRKEISEQELLAVAKDLREKNWKHQAAANADYVAVGDFTFYDHILDLQVATGAIPARFGFDSQNLSLEQFFQLARGNKDQFAIEMTKWFDTNYHYLVPEFHADTEFKANAKHYVQQLQEAQALGLKAKPTVVGPLTFLWVGKEKGAVEFDRLSLLPKLLPVYVEILTALVEAGAEWIQIDEPALTVDLPKEWVEAYKDVYATLSKVSAKILLGTYFGSVAEHAALLKALPVDGLHIDLVRAPEQPDAFADYDKVLSVGVIDGRNIWRANLNKVLETVEPLQAKLGERLWISSSCSLLHTPFDLSVEEKLKANKPDLYSWLAFTLQKTQELRVLKAALNEGRDSVAEELAASQAAADSRANSSEIHRADVAKRLADLPANADQRKSPFVNRIKAQQAWLNLPLLPTTNIGSFPQTTEIRQARAAFKKGELSAADYEAAMKKEIALVVEEQEKLDLDVLVHGEAERNDMVEYFGELLSGFAFTQYGWVQSYGSRCVKPPIIFGDVSRPEAMTVAWSTYAQSLTKRPMKGMLTGPVTILQWSFVRNDIPRATVCKQIALALNDEVLDLEKAGIKVIQIDEPAIREGLPLKRADWDAYLNWAGESFRLSSAGCEDSTQIHTHMCYSEFNDILPAIAAMDADVITIETSRSDMELLTAFGKFKYPNDIGPGVYDIHSPRVPTEAEVEHLLRKAIEVVPVERLWVNPDCGLKTRGWKETLEQLQVMMNVTRKLRAELAK</sequence>
<organism>
    <name type="scientific">Neisseria meningitidis serogroup C (strain 053442)</name>
    <dbReference type="NCBI Taxonomy" id="374833"/>
    <lineage>
        <taxon>Bacteria</taxon>
        <taxon>Pseudomonadati</taxon>
        <taxon>Pseudomonadota</taxon>
        <taxon>Betaproteobacteria</taxon>
        <taxon>Neisseriales</taxon>
        <taxon>Neisseriaceae</taxon>
        <taxon>Neisseria</taxon>
    </lineage>
</organism>
<keyword id="KW-0028">Amino-acid biosynthesis</keyword>
<keyword id="KW-0479">Metal-binding</keyword>
<keyword id="KW-0486">Methionine biosynthesis</keyword>
<keyword id="KW-0489">Methyltransferase</keyword>
<keyword id="KW-0677">Repeat</keyword>
<keyword id="KW-0808">Transferase</keyword>
<keyword id="KW-0862">Zinc</keyword>
<protein>
    <recommendedName>
        <fullName evidence="1">5-methyltetrahydropteroyltriglutamate--homocysteine methyltransferase</fullName>
        <ecNumber evidence="1">2.1.1.14</ecNumber>
    </recommendedName>
    <alternativeName>
        <fullName evidence="1">Cobalamin-independent methionine synthase</fullName>
    </alternativeName>
    <alternativeName>
        <fullName evidence="1">Methionine synthase, vitamin-B12 independent isozyme</fullName>
    </alternativeName>
</protein>
<evidence type="ECO:0000255" key="1">
    <source>
        <dbReference type="HAMAP-Rule" id="MF_00172"/>
    </source>
</evidence>
<gene>
    <name evidence="1" type="primary">metE</name>
    <name type="ordered locus">NMCC_0887</name>
</gene>
<comment type="function">
    <text evidence="1">Catalyzes the transfer of a methyl group from 5-methyltetrahydrofolate to homocysteine resulting in methionine formation.</text>
</comment>
<comment type="catalytic activity">
    <reaction evidence="1">
        <text>5-methyltetrahydropteroyltri-L-glutamate + L-homocysteine = tetrahydropteroyltri-L-glutamate + L-methionine</text>
        <dbReference type="Rhea" id="RHEA:21196"/>
        <dbReference type="ChEBI" id="CHEBI:57844"/>
        <dbReference type="ChEBI" id="CHEBI:58140"/>
        <dbReference type="ChEBI" id="CHEBI:58199"/>
        <dbReference type="ChEBI" id="CHEBI:58207"/>
        <dbReference type="EC" id="2.1.1.14"/>
    </reaction>
</comment>
<comment type="cofactor">
    <cofactor evidence="1">
        <name>Zn(2+)</name>
        <dbReference type="ChEBI" id="CHEBI:29105"/>
    </cofactor>
    <text evidence="1">Binds 1 zinc ion per subunit.</text>
</comment>
<comment type="pathway">
    <text evidence="1">Amino-acid biosynthesis; L-methionine biosynthesis via de novo pathway; L-methionine from L-homocysteine (MetE route): step 1/1.</text>
</comment>
<comment type="similarity">
    <text evidence="1">Belongs to the vitamin-B12 independent methionine synthase family.</text>
</comment>
<proteinExistence type="inferred from homology"/>
<dbReference type="EC" id="2.1.1.14" evidence="1"/>
<dbReference type="EMBL" id="CP000381">
    <property type="protein sequence ID" value="ABX73069.1"/>
    <property type="molecule type" value="Genomic_DNA"/>
</dbReference>
<dbReference type="RefSeq" id="WP_012221550.1">
    <property type="nucleotide sequence ID" value="NC_010120.1"/>
</dbReference>
<dbReference type="SMR" id="A9M4E3"/>
<dbReference type="KEGG" id="nmn:NMCC_0887"/>
<dbReference type="HOGENOM" id="CLU_013175_0_0_4"/>
<dbReference type="UniPathway" id="UPA00051">
    <property type="reaction ID" value="UER00082"/>
</dbReference>
<dbReference type="Proteomes" id="UP000001177">
    <property type="component" value="Chromosome"/>
</dbReference>
<dbReference type="GO" id="GO:0003871">
    <property type="term" value="F:5-methyltetrahydropteroyltriglutamate-homocysteine S-methyltransferase activity"/>
    <property type="evidence" value="ECO:0007669"/>
    <property type="project" value="UniProtKB-UniRule"/>
</dbReference>
<dbReference type="GO" id="GO:0008270">
    <property type="term" value="F:zinc ion binding"/>
    <property type="evidence" value="ECO:0007669"/>
    <property type="project" value="InterPro"/>
</dbReference>
<dbReference type="GO" id="GO:0009086">
    <property type="term" value="P:methionine biosynthetic process"/>
    <property type="evidence" value="ECO:0007669"/>
    <property type="project" value="UniProtKB-UniRule"/>
</dbReference>
<dbReference type="GO" id="GO:0032259">
    <property type="term" value="P:methylation"/>
    <property type="evidence" value="ECO:0007669"/>
    <property type="project" value="UniProtKB-KW"/>
</dbReference>
<dbReference type="CDD" id="cd03311">
    <property type="entry name" value="CIMS_C_terminal_like"/>
    <property type="match status" value="1"/>
</dbReference>
<dbReference type="CDD" id="cd03312">
    <property type="entry name" value="CIMS_N_terminal_like"/>
    <property type="match status" value="1"/>
</dbReference>
<dbReference type="FunFam" id="3.20.20.210:FF:000002">
    <property type="entry name" value="5-methyltetrahydropteroyltriglutamate--homocysteine methyltransferase"/>
    <property type="match status" value="1"/>
</dbReference>
<dbReference type="Gene3D" id="3.20.20.210">
    <property type="match status" value="2"/>
</dbReference>
<dbReference type="HAMAP" id="MF_00172">
    <property type="entry name" value="Meth_synth"/>
    <property type="match status" value="1"/>
</dbReference>
<dbReference type="InterPro" id="IPR013215">
    <property type="entry name" value="Cbl-indep_Met_Synth_N"/>
</dbReference>
<dbReference type="InterPro" id="IPR006276">
    <property type="entry name" value="Cobalamin-indep_Met_synthase"/>
</dbReference>
<dbReference type="InterPro" id="IPR002629">
    <property type="entry name" value="Met_Synth_C/arc"/>
</dbReference>
<dbReference type="InterPro" id="IPR038071">
    <property type="entry name" value="UROD/MetE-like_sf"/>
</dbReference>
<dbReference type="NCBIfam" id="TIGR01371">
    <property type="entry name" value="met_syn_B12ind"/>
    <property type="match status" value="1"/>
</dbReference>
<dbReference type="NCBIfam" id="NF003556">
    <property type="entry name" value="PRK05222.1"/>
    <property type="match status" value="1"/>
</dbReference>
<dbReference type="PANTHER" id="PTHR30519">
    <property type="entry name" value="5-METHYLTETRAHYDROPTEROYLTRIGLUTAMATE--HOMOCYSTEINE METHYLTRANSFERASE"/>
    <property type="match status" value="1"/>
</dbReference>
<dbReference type="Pfam" id="PF08267">
    <property type="entry name" value="Meth_synt_1"/>
    <property type="match status" value="1"/>
</dbReference>
<dbReference type="Pfam" id="PF01717">
    <property type="entry name" value="Meth_synt_2"/>
    <property type="match status" value="1"/>
</dbReference>
<dbReference type="PIRSF" id="PIRSF000382">
    <property type="entry name" value="MeTrfase_B12_ind"/>
    <property type="match status" value="1"/>
</dbReference>
<dbReference type="SUPFAM" id="SSF51726">
    <property type="entry name" value="UROD/MetE-like"/>
    <property type="match status" value="2"/>
</dbReference>
<reference key="1">
    <citation type="journal article" date="2008" name="Genomics">
        <title>Characterization of ST-4821 complex, a unique Neisseria meningitidis clone.</title>
        <authorList>
            <person name="Peng J."/>
            <person name="Yang L."/>
            <person name="Yang F."/>
            <person name="Yang J."/>
            <person name="Yan Y."/>
            <person name="Nie H."/>
            <person name="Zhang X."/>
            <person name="Xiong Z."/>
            <person name="Jiang Y."/>
            <person name="Cheng F."/>
            <person name="Xu X."/>
            <person name="Chen S."/>
            <person name="Sun L."/>
            <person name="Li W."/>
            <person name="Shen Y."/>
            <person name="Shao Z."/>
            <person name="Liang X."/>
            <person name="Xu J."/>
            <person name="Jin Q."/>
        </authorList>
    </citation>
    <scope>NUCLEOTIDE SEQUENCE [LARGE SCALE GENOMIC DNA]</scope>
    <source>
        <strain>053442</strain>
    </source>
</reference>